<dbReference type="EMBL" id="CP000494">
    <property type="protein sequence ID" value="ABQ32462.1"/>
    <property type="molecule type" value="Genomic_DNA"/>
</dbReference>
<dbReference type="RefSeq" id="WP_011942683.1">
    <property type="nucleotide sequence ID" value="NC_009485.1"/>
</dbReference>
<dbReference type="SMR" id="A5E8G8"/>
<dbReference type="STRING" id="288000.BBta_0165"/>
<dbReference type="KEGG" id="bbt:BBta_0165"/>
<dbReference type="eggNOG" id="COG0445">
    <property type="taxonomic scope" value="Bacteria"/>
</dbReference>
<dbReference type="HOGENOM" id="CLU_007831_2_2_5"/>
<dbReference type="OrthoDB" id="9815560at2"/>
<dbReference type="Proteomes" id="UP000000246">
    <property type="component" value="Chromosome"/>
</dbReference>
<dbReference type="GO" id="GO:0005829">
    <property type="term" value="C:cytosol"/>
    <property type="evidence" value="ECO:0007669"/>
    <property type="project" value="TreeGrafter"/>
</dbReference>
<dbReference type="GO" id="GO:0050660">
    <property type="term" value="F:flavin adenine dinucleotide binding"/>
    <property type="evidence" value="ECO:0007669"/>
    <property type="project" value="UniProtKB-UniRule"/>
</dbReference>
<dbReference type="GO" id="GO:0030488">
    <property type="term" value="P:tRNA methylation"/>
    <property type="evidence" value="ECO:0007669"/>
    <property type="project" value="TreeGrafter"/>
</dbReference>
<dbReference type="GO" id="GO:0002098">
    <property type="term" value="P:tRNA wobble uridine modification"/>
    <property type="evidence" value="ECO:0007669"/>
    <property type="project" value="InterPro"/>
</dbReference>
<dbReference type="FunFam" id="3.50.50.60:FF:000145">
    <property type="entry name" value="tRNA uridine 5-carboxymethylaminomethyl modification enzyme"/>
    <property type="match status" value="1"/>
</dbReference>
<dbReference type="FunFam" id="1.10.150.570:FF:000001">
    <property type="entry name" value="tRNA uridine 5-carboxymethylaminomethyl modification enzyme MnmG"/>
    <property type="match status" value="1"/>
</dbReference>
<dbReference type="FunFam" id="3.50.50.60:FF:000002">
    <property type="entry name" value="tRNA uridine 5-carboxymethylaminomethyl modification enzyme MnmG"/>
    <property type="match status" value="1"/>
</dbReference>
<dbReference type="Gene3D" id="3.50.50.60">
    <property type="entry name" value="FAD/NAD(P)-binding domain"/>
    <property type="match status" value="2"/>
</dbReference>
<dbReference type="Gene3D" id="1.10.150.570">
    <property type="entry name" value="GidA associated domain, C-terminal subdomain"/>
    <property type="match status" value="1"/>
</dbReference>
<dbReference type="HAMAP" id="MF_00129">
    <property type="entry name" value="MnmG_GidA"/>
    <property type="match status" value="1"/>
</dbReference>
<dbReference type="InterPro" id="IPR036188">
    <property type="entry name" value="FAD/NAD-bd_sf"/>
</dbReference>
<dbReference type="InterPro" id="IPR049312">
    <property type="entry name" value="GIDA_C_N"/>
</dbReference>
<dbReference type="InterPro" id="IPR004416">
    <property type="entry name" value="MnmG"/>
</dbReference>
<dbReference type="InterPro" id="IPR002218">
    <property type="entry name" value="MnmG-rel"/>
</dbReference>
<dbReference type="InterPro" id="IPR020595">
    <property type="entry name" value="MnmG-rel_CS"/>
</dbReference>
<dbReference type="InterPro" id="IPR026904">
    <property type="entry name" value="MnmG_C"/>
</dbReference>
<dbReference type="InterPro" id="IPR047001">
    <property type="entry name" value="MnmG_C_subdom"/>
</dbReference>
<dbReference type="InterPro" id="IPR044920">
    <property type="entry name" value="MnmG_C_subdom_sf"/>
</dbReference>
<dbReference type="InterPro" id="IPR040131">
    <property type="entry name" value="MnmG_N"/>
</dbReference>
<dbReference type="NCBIfam" id="TIGR00136">
    <property type="entry name" value="mnmG_gidA"/>
    <property type="match status" value="1"/>
</dbReference>
<dbReference type="PANTHER" id="PTHR11806">
    <property type="entry name" value="GLUCOSE INHIBITED DIVISION PROTEIN A"/>
    <property type="match status" value="1"/>
</dbReference>
<dbReference type="PANTHER" id="PTHR11806:SF0">
    <property type="entry name" value="PROTEIN MTO1 HOMOLOG, MITOCHONDRIAL"/>
    <property type="match status" value="1"/>
</dbReference>
<dbReference type="Pfam" id="PF01134">
    <property type="entry name" value="GIDA"/>
    <property type="match status" value="1"/>
</dbReference>
<dbReference type="Pfam" id="PF21680">
    <property type="entry name" value="GIDA_C_1st"/>
    <property type="match status" value="1"/>
</dbReference>
<dbReference type="Pfam" id="PF13932">
    <property type="entry name" value="SAM_GIDA_C"/>
    <property type="match status" value="1"/>
</dbReference>
<dbReference type="PRINTS" id="PR00411">
    <property type="entry name" value="PNDRDTASEI"/>
</dbReference>
<dbReference type="SMART" id="SM01228">
    <property type="entry name" value="GIDA_assoc_3"/>
    <property type="match status" value="1"/>
</dbReference>
<dbReference type="SUPFAM" id="SSF51905">
    <property type="entry name" value="FAD/NAD(P)-binding domain"/>
    <property type="match status" value="1"/>
</dbReference>
<dbReference type="PROSITE" id="PS01280">
    <property type="entry name" value="GIDA_1"/>
    <property type="match status" value="1"/>
</dbReference>
<dbReference type="PROSITE" id="PS01281">
    <property type="entry name" value="GIDA_2"/>
    <property type="match status" value="1"/>
</dbReference>
<protein>
    <recommendedName>
        <fullName evidence="1">tRNA uridine 5-carboxymethylaminomethyl modification enzyme MnmG</fullName>
    </recommendedName>
    <alternativeName>
        <fullName evidence="1">Glucose-inhibited division protein A</fullName>
    </alternativeName>
</protein>
<keyword id="KW-0963">Cytoplasm</keyword>
<keyword id="KW-0274">FAD</keyword>
<keyword id="KW-0285">Flavoprotein</keyword>
<keyword id="KW-0520">NAD</keyword>
<keyword id="KW-1185">Reference proteome</keyword>
<keyword id="KW-0819">tRNA processing</keyword>
<evidence type="ECO:0000255" key="1">
    <source>
        <dbReference type="HAMAP-Rule" id="MF_00129"/>
    </source>
</evidence>
<gene>
    <name evidence="1" type="primary">mnmG</name>
    <name evidence="1" type="synonym">gidA</name>
    <name type="ordered locus">BBta_0165</name>
</gene>
<sequence>MSDHLTSYDVIVIGGGHAGCEAAEASARMGARTALVTHHFATIGAMSCNPAIGGLGKGHLVREVDALDGLMGRVADAGGIQFRVLNRRKGPAVRGPRAQADRKLYAAAMQAAIRETANLTVVEGEADQLIVADGQITGLRLADGRPLACGAIVITTGTFLRGLIHLGEKTWPAGRVGEAPALGLSQSLEAIGFRLGRLKTGTPPRLDGTTIDWSAVEMQPGDDPPEPFSVLTQTITTPQIQCGITRTTTATHDVIRANVHRSPMYSGQIKSTGPRYCPSVEDKIVRFGDRDGHQIFLEPEGLDDTTVYPNGISTSLPEEVQLALLPTIPGLERVRMIRPGYAIEYDHVDPRELEPTLQTKRMRGLFLAGQINGTTGYEEAAAQGLVAGLNAALTAGGGEPIVFDRADGYVGVMIDDLVTRGITEPYRMFTSRAEYRLTLRADNADQRLTDKGIALGCVGGDRARFHRTKMDALEAARSLARSVTITPNEAAKYGLTLNRDGQRRSAFELMAYPEIGFSEVRGIWPELGTIGPAIAVHLEIDAKYDVYVRRQSEDVDAFRRDEGLVLGDIDYALVPGLSNEARAKLTAARPWTIGQAGRIDGMTPAALGILAAYLRREARRSKAMV</sequence>
<name>MNMG_BRASB</name>
<proteinExistence type="inferred from homology"/>
<reference key="1">
    <citation type="journal article" date="2007" name="Science">
        <title>Legumes symbioses: absence of nod genes in photosynthetic bradyrhizobia.</title>
        <authorList>
            <person name="Giraud E."/>
            <person name="Moulin L."/>
            <person name="Vallenet D."/>
            <person name="Barbe V."/>
            <person name="Cytryn E."/>
            <person name="Avarre J.-C."/>
            <person name="Jaubert M."/>
            <person name="Simon D."/>
            <person name="Cartieaux F."/>
            <person name="Prin Y."/>
            <person name="Bena G."/>
            <person name="Hannibal L."/>
            <person name="Fardoux J."/>
            <person name="Kojadinovic M."/>
            <person name="Vuillet L."/>
            <person name="Lajus A."/>
            <person name="Cruveiller S."/>
            <person name="Rouy Z."/>
            <person name="Mangenot S."/>
            <person name="Segurens B."/>
            <person name="Dossat C."/>
            <person name="Franck W.L."/>
            <person name="Chang W.-S."/>
            <person name="Saunders E."/>
            <person name="Bruce D."/>
            <person name="Richardson P."/>
            <person name="Normand P."/>
            <person name="Dreyfus B."/>
            <person name="Pignol D."/>
            <person name="Stacey G."/>
            <person name="Emerich D."/>
            <person name="Vermeglio A."/>
            <person name="Medigue C."/>
            <person name="Sadowsky M."/>
        </authorList>
    </citation>
    <scope>NUCLEOTIDE SEQUENCE [LARGE SCALE GENOMIC DNA]</scope>
    <source>
        <strain>BTAi1 / ATCC BAA-1182</strain>
    </source>
</reference>
<accession>A5E8G8</accession>
<organism>
    <name type="scientific">Bradyrhizobium sp. (strain BTAi1 / ATCC BAA-1182)</name>
    <dbReference type="NCBI Taxonomy" id="288000"/>
    <lineage>
        <taxon>Bacteria</taxon>
        <taxon>Pseudomonadati</taxon>
        <taxon>Pseudomonadota</taxon>
        <taxon>Alphaproteobacteria</taxon>
        <taxon>Hyphomicrobiales</taxon>
        <taxon>Nitrobacteraceae</taxon>
        <taxon>Bradyrhizobium</taxon>
    </lineage>
</organism>
<feature type="chain" id="PRO_1000016556" description="tRNA uridine 5-carboxymethylaminomethyl modification enzyme MnmG">
    <location>
        <begin position="1"/>
        <end position="625"/>
    </location>
</feature>
<feature type="binding site" evidence="1">
    <location>
        <begin position="14"/>
        <end position="19"/>
    </location>
    <ligand>
        <name>FAD</name>
        <dbReference type="ChEBI" id="CHEBI:57692"/>
    </ligand>
</feature>
<feature type="binding site" evidence="1">
    <location>
        <begin position="273"/>
        <end position="287"/>
    </location>
    <ligand>
        <name>NAD(+)</name>
        <dbReference type="ChEBI" id="CHEBI:57540"/>
    </ligand>
</feature>
<comment type="function">
    <text evidence="1">NAD-binding protein involved in the addition of a carboxymethylaminomethyl (cmnm) group at the wobble position (U34) of certain tRNAs, forming tRNA-cmnm(5)s(2)U34.</text>
</comment>
<comment type="cofactor">
    <cofactor evidence="1">
        <name>FAD</name>
        <dbReference type="ChEBI" id="CHEBI:57692"/>
    </cofactor>
</comment>
<comment type="subunit">
    <text evidence="1">Homodimer. Heterotetramer of two MnmE and two MnmG subunits.</text>
</comment>
<comment type="subcellular location">
    <subcellularLocation>
        <location evidence="1">Cytoplasm</location>
    </subcellularLocation>
</comment>
<comment type="similarity">
    <text evidence="1">Belongs to the MnmG family.</text>
</comment>